<accession>B7JES9</accession>
<sequence>MKVKICGITDMETAKRACEYGADALGFVFAESKRKITPGLAKEIIQELPANVLKIGVFVNESVEVIQKITENCGLTHVQLHGGEDNHQIRRLNIPSIKSLGVTSESDMKNAQGYETDYILFDSPKEKFHGGNGKAFPWELLAHMPKELREKTILAGGLNTLNIEEAIRTVRPYMVDVSSGVETEGKKDVEKIKQFIIKAKECSK</sequence>
<dbReference type="EC" id="5.3.1.24" evidence="1"/>
<dbReference type="EMBL" id="CP001283">
    <property type="protein sequence ID" value="ACK87544.1"/>
    <property type="molecule type" value="Genomic_DNA"/>
</dbReference>
<dbReference type="RefSeq" id="WP_000865105.1">
    <property type="nucleotide sequence ID" value="NC_011773.1"/>
</dbReference>
<dbReference type="SMR" id="B7JES9"/>
<dbReference type="KEGG" id="bcu:BCAH820_1320"/>
<dbReference type="HOGENOM" id="CLU_076364_1_0_9"/>
<dbReference type="UniPathway" id="UPA00035">
    <property type="reaction ID" value="UER00042"/>
</dbReference>
<dbReference type="Proteomes" id="UP000001363">
    <property type="component" value="Chromosome"/>
</dbReference>
<dbReference type="GO" id="GO:0004640">
    <property type="term" value="F:phosphoribosylanthranilate isomerase activity"/>
    <property type="evidence" value="ECO:0007669"/>
    <property type="project" value="UniProtKB-UniRule"/>
</dbReference>
<dbReference type="GO" id="GO:0000162">
    <property type="term" value="P:L-tryptophan biosynthetic process"/>
    <property type="evidence" value="ECO:0007669"/>
    <property type="project" value="UniProtKB-UniRule"/>
</dbReference>
<dbReference type="CDD" id="cd00405">
    <property type="entry name" value="PRAI"/>
    <property type="match status" value="1"/>
</dbReference>
<dbReference type="FunFam" id="3.20.20.70:FF:000075">
    <property type="entry name" value="Tryptophan biosynthesis protein TRP1"/>
    <property type="match status" value="1"/>
</dbReference>
<dbReference type="Gene3D" id="3.20.20.70">
    <property type="entry name" value="Aldolase class I"/>
    <property type="match status" value="1"/>
</dbReference>
<dbReference type="HAMAP" id="MF_00135">
    <property type="entry name" value="PRAI"/>
    <property type="match status" value="1"/>
</dbReference>
<dbReference type="InterPro" id="IPR013785">
    <property type="entry name" value="Aldolase_TIM"/>
</dbReference>
<dbReference type="InterPro" id="IPR001240">
    <property type="entry name" value="PRAI_dom"/>
</dbReference>
<dbReference type="InterPro" id="IPR011060">
    <property type="entry name" value="RibuloseP-bd_barrel"/>
</dbReference>
<dbReference type="InterPro" id="IPR044643">
    <property type="entry name" value="TrpF_fam"/>
</dbReference>
<dbReference type="NCBIfam" id="NF002297">
    <property type="entry name" value="PRK01222.1-3"/>
    <property type="match status" value="1"/>
</dbReference>
<dbReference type="PANTHER" id="PTHR42894">
    <property type="entry name" value="N-(5'-PHOSPHORIBOSYL)ANTHRANILATE ISOMERASE"/>
    <property type="match status" value="1"/>
</dbReference>
<dbReference type="PANTHER" id="PTHR42894:SF1">
    <property type="entry name" value="N-(5'-PHOSPHORIBOSYL)ANTHRANILATE ISOMERASE"/>
    <property type="match status" value="1"/>
</dbReference>
<dbReference type="Pfam" id="PF00697">
    <property type="entry name" value="PRAI"/>
    <property type="match status" value="1"/>
</dbReference>
<dbReference type="SUPFAM" id="SSF51366">
    <property type="entry name" value="Ribulose-phoshate binding barrel"/>
    <property type="match status" value="1"/>
</dbReference>
<protein>
    <recommendedName>
        <fullName evidence="1">N-(5'-phosphoribosyl)anthranilate isomerase</fullName>
        <shortName evidence="1">PRAI</shortName>
        <ecNumber evidence="1">5.3.1.24</ecNumber>
    </recommendedName>
</protein>
<organism>
    <name type="scientific">Bacillus cereus (strain AH820)</name>
    <dbReference type="NCBI Taxonomy" id="405535"/>
    <lineage>
        <taxon>Bacteria</taxon>
        <taxon>Bacillati</taxon>
        <taxon>Bacillota</taxon>
        <taxon>Bacilli</taxon>
        <taxon>Bacillales</taxon>
        <taxon>Bacillaceae</taxon>
        <taxon>Bacillus</taxon>
        <taxon>Bacillus cereus group</taxon>
    </lineage>
</organism>
<name>TRPF_BACC0</name>
<proteinExistence type="inferred from homology"/>
<comment type="catalytic activity">
    <reaction evidence="1">
        <text>N-(5-phospho-beta-D-ribosyl)anthranilate = 1-(2-carboxyphenylamino)-1-deoxy-D-ribulose 5-phosphate</text>
        <dbReference type="Rhea" id="RHEA:21540"/>
        <dbReference type="ChEBI" id="CHEBI:18277"/>
        <dbReference type="ChEBI" id="CHEBI:58613"/>
        <dbReference type="EC" id="5.3.1.24"/>
    </reaction>
</comment>
<comment type="pathway">
    <text evidence="1">Amino-acid biosynthesis; L-tryptophan biosynthesis; L-tryptophan from chorismate: step 3/5.</text>
</comment>
<comment type="similarity">
    <text evidence="1">Belongs to the TrpF family.</text>
</comment>
<reference key="1">
    <citation type="submission" date="2008-10" db="EMBL/GenBank/DDBJ databases">
        <title>Genome sequence of Bacillus cereus AH820.</title>
        <authorList>
            <person name="Dodson R.J."/>
            <person name="Durkin A.S."/>
            <person name="Rosovitz M.J."/>
            <person name="Rasko D.A."/>
            <person name="Hoffmaster A."/>
            <person name="Ravel J."/>
            <person name="Sutton G."/>
        </authorList>
    </citation>
    <scope>NUCLEOTIDE SEQUENCE [LARGE SCALE GENOMIC DNA]</scope>
    <source>
        <strain>AH820</strain>
    </source>
</reference>
<evidence type="ECO:0000255" key="1">
    <source>
        <dbReference type="HAMAP-Rule" id="MF_00135"/>
    </source>
</evidence>
<gene>
    <name evidence="1" type="primary">trpF</name>
    <name type="ordered locus">BCAH820_1320</name>
</gene>
<feature type="chain" id="PRO_1000197077" description="N-(5'-phosphoribosyl)anthranilate isomerase">
    <location>
        <begin position="1"/>
        <end position="204"/>
    </location>
</feature>
<keyword id="KW-0028">Amino-acid biosynthesis</keyword>
<keyword id="KW-0057">Aromatic amino acid biosynthesis</keyword>
<keyword id="KW-0413">Isomerase</keyword>
<keyword id="KW-0822">Tryptophan biosynthesis</keyword>